<reference key="1">
    <citation type="journal article" date="1997" name="Biochem. J.">
        <title>Difference in hepatic metallothionein content in Antarctic red-blooded and haemoglobinless fish: undetectable metallothionein levels in haemoglobinless fish is accompanied by accumulation of untranslated metallothionein mRNA.</title>
        <authorList>
            <person name="Scudiero R."/>
            <person name="Carginale V."/>
            <person name="Riggio M."/>
            <person name="Capasso C."/>
            <person name="Capasso A."/>
            <person name="Kille P."/>
            <person name="di Prisco G."/>
            <person name="Parisi E."/>
        </authorList>
    </citation>
    <scope>NUCLEOTIDE SEQUENCE [MRNA]</scope>
    <source>
        <tissue>Liver</tissue>
    </source>
</reference>
<proteinExistence type="inferred from homology"/>
<keyword id="KW-0479">Metal-binding</keyword>
<keyword id="KW-0480">Metal-thiolate cluster</keyword>
<evidence type="ECO:0000250" key="1"/>
<evidence type="ECO:0000250" key="2">
    <source>
        <dbReference type="UniProtKB" id="P02795"/>
    </source>
</evidence>
<evidence type="ECO:0000250" key="3">
    <source>
        <dbReference type="UniProtKB" id="P62339"/>
    </source>
</evidence>
<evidence type="ECO:0000305" key="4"/>
<comment type="function">
    <text evidence="1">Metallothioneins have a high content of cysteine residues that bind various heavy metals.</text>
</comment>
<comment type="domain">
    <text>Class I metallothioneins contain 2 metal-binding domains: four divalent ions are chelated within cluster A of the alpha domain and are coordinated via cysteinyl thiolate bridges to 11 cysteine ligands. Cluster B, the corresponding region within the beta domain, can ligate three divalent ions to 9 cysteines.</text>
</comment>
<comment type="similarity">
    <text evidence="4">Belongs to the metallothionein superfamily. Type 1 family.</text>
</comment>
<organism>
    <name type="scientific">Trematomus bernacchii</name>
    <name type="common">Emerald rockcod</name>
    <name type="synonym">Pseudotrematomus bernacchii</name>
    <dbReference type="NCBI Taxonomy" id="40690"/>
    <lineage>
        <taxon>Eukaryota</taxon>
        <taxon>Metazoa</taxon>
        <taxon>Chordata</taxon>
        <taxon>Craniata</taxon>
        <taxon>Vertebrata</taxon>
        <taxon>Euteleostomi</taxon>
        <taxon>Actinopterygii</taxon>
        <taxon>Neopterygii</taxon>
        <taxon>Teleostei</taxon>
        <taxon>Neoteleostei</taxon>
        <taxon>Acanthomorphata</taxon>
        <taxon>Eupercaria</taxon>
        <taxon>Perciformes</taxon>
        <taxon>Notothenioidei</taxon>
        <taxon>Nototheniidae</taxon>
        <taxon>Trematomus</taxon>
    </lineage>
</organism>
<feature type="chain" id="PRO_0000197301" description="Metallothionein B">
    <location>
        <begin position="1"/>
        <end position="60"/>
    </location>
</feature>
<feature type="region of interest" description="Beta">
    <location>
        <begin position="1"/>
        <end position="28"/>
    </location>
</feature>
<feature type="region of interest" description="Alpha">
    <location>
        <begin position="29"/>
        <end position="60"/>
    </location>
</feature>
<feature type="binding site" evidence="2">
    <location>
        <position position="4"/>
    </location>
    <ligand>
        <name>a divalent metal cation</name>
        <dbReference type="ChEBI" id="CHEBI:60240"/>
        <label>1</label>
        <note>in cluster B</note>
    </ligand>
</feature>
<feature type="binding site" evidence="2">
    <location>
        <position position="6"/>
    </location>
    <ligand>
        <name>a divalent metal cation</name>
        <dbReference type="ChEBI" id="CHEBI:60240"/>
        <label>1</label>
        <note>in cluster B</note>
    </ligand>
</feature>
<feature type="binding site" evidence="2">
    <location>
        <position position="6"/>
    </location>
    <ligand>
        <name>a divalent metal cation</name>
        <dbReference type="ChEBI" id="CHEBI:60240"/>
        <label>2</label>
        <note>in cluster B</note>
    </ligand>
</feature>
<feature type="binding site" evidence="2">
    <location>
        <position position="12"/>
    </location>
    <ligand>
        <name>a divalent metal cation</name>
        <dbReference type="ChEBI" id="CHEBI:60240"/>
        <label>2</label>
        <note>in cluster B</note>
    </ligand>
</feature>
<feature type="binding site" evidence="2">
    <location>
        <position position="14"/>
    </location>
    <ligand>
        <name>a divalent metal cation</name>
        <dbReference type="ChEBI" id="CHEBI:60240"/>
        <label>2</label>
        <note>in cluster B</note>
    </ligand>
</feature>
<feature type="binding site" evidence="2">
    <location>
        <position position="14"/>
    </location>
    <ligand>
        <name>a divalent metal cation</name>
        <dbReference type="ChEBI" id="CHEBI:60240"/>
        <label>3</label>
        <note>in cluster B</note>
    </ligand>
</feature>
<feature type="binding site" evidence="2">
    <location>
        <position position="18"/>
    </location>
    <ligand>
        <name>a divalent metal cation</name>
        <dbReference type="ChEBI" id="CHEBI:60240"/>
        <label>3</label>
        <note>in cluster B</note>
    </ligand>
</feature>
<feature type="binding site" evidence="2">
    <location>
        <position position="20"/>
    </location>
    <ligand>
        <name>a divalent metal cation</name>
        <dbReference type="ChEBI" id="CHEBI:60240"/>
        <label>1</label>
        <note>in cluster B</note>
    </ligand>
</feature>
<feature type="binding site" evidence="2">
    <location>
        <position position="23"/>
    </location>
    <ligand>
        <name>a divalent metal cation</name>
        <dbReference type="ChEBI" id="CHEBI:60240"/>
        <label>1</label>
        <note>in cluster B</note>
    </ligand>
</feature>
<feature type="binding site" evidence="2">
    <location>
        <position position="23"/>
    </location>
    <ligand>
        <name>a divalent metal cation</name>
        <dbReference type="ChEBI" id="CHEBI:60240"/>
        <label>3</label>
        <note>in cluster B</note>
    </ligand>
</feature>
<feature type="binding site" evidence="2">
    <location>
        <position position="25"/>
    </location>
    <ligand>
        <name>a divalent metal cation</name>
        <dbReference type="ChEBI" id="CHEBI:60240"/>
        <label>2</label>
        <note>in cluster B</note>
    </ligand>
</feature>
<feature type="binding site" evidence="2">
    <location>
        <position position="28"/>
    </location>
    <ligand>
        <name>a divalent metal cation</name>
        <dbReference type="ChEBI" id="CHEBI:60240"/>
        <label>3</label>
        <note>in cluster B</note>
    </ligand>
</feature>
<feature type="binding site" evidence="2">
    <location>
        <position position="32"/>
    </location>
    <ligand>
        <name>a divalent metal cation</name>
        <dbReference type="ChEBI" id="CHEBI:60240"/>
        <label>4</label>
        <note>in cluster A</note>
    </ligand>
</feature>
<feature type="binding site" evidence="2">
    <location>
        <position position="33"/>
    </location>
    <ligand>
        <name>a divalent metal cation</name>
        <dbReference type="ChEBI" id="CHEBI:60240"/>
        <label>4</label>
        <note>in cluster A</note>
    </ligand>
</feature>
<feature type="binding site" evidence="2">
    <location>
        <position position="33"/>
    </location>
    <ligand>
        <name>a divalent metal cation</name>
        <dbReference type="ChEBI" id="CHEBI:60240"/>
        <label>5</label>
        <note>in cluster A</note>
    </ligand>
</feature>
<feature type="binding site" evidence="2">
    <location>
        <position position="35"/>
    </location>
    <ligand>
        <name>a divalent metal cation</name>
        <dbReference type="ChEBI" id="CHEBI:60240"/>
        <label>5</label>
        <note>in cluster A</note>
    </ligand>
</feature>
<feature type="binding site" evidence="2">
    <location>
        <position position="36"/>
    </location>
    <ligand>
        <name>a divalent metal cation</name>
        <dbReference type="ChEBI" id="CHEBI:60240"/>
        <label>5</label>
        <note>in cluster A</note>
    </ligand>
</feature>
<feature type="binding site" evidence="2">
    <location>
        <position position="36"/>
    </location>
    <ligand>
        <name>a divalent metal cation</name>
        <dbReference type="ChEBI" id="CHEBI:60240"/>
        <label>6</label>
        <note>in cluster A</note>
    </ligand>
</feature>
<feature type="binding site" evidence="2">
    <location>
        <position position="40"/>
    </location>
    <ligand>
        <name>a divalent metal cation</name>
        <dbReference type="ChEBI" id="CHEBI:60240"/>
        <label>6</label>
        <note>in cluster A</note>
    </ligand>
</feature>
<feature type="binding site" evidence="2">
    <location>
        <position position="43"/>
    </location>
    <ligand>
        <name>a divalent metal cation</name>
        <dbReference type="ChEBI" id="CHEBI:60240"/>
        <label>4</label>
        <note>in cluster A</note>
    </ligand>
</feature>
<feature type="binding site" evidence="2">
    <location>
        <position position="43"/>
    </location>
    <ligand>
        <name>a divalent metal cation</name>
        <dbReference type="ChEBI" id="CHEBI:60240"/>
        <label>6</label>
        <note>in cluster A</note>
    </ligand>
</feature>
<feature type="binding site" evidence="2">
    <location>
        <position position="47"/>
    </location>
    <ligand>
        <name>a divalent metal cation</name>
        <dbReference type="ChEBI" id="CHEBI:60240"/>
        <label>4</label>
        <note>in cluster A</note>
    </ligand>
</feature>
<feature type="binding site" evidence="2">
    <location>
        <position position="49"/>
    </location>
    <ligand>
        <name>a divalent metal cation</name>
        <dbReference type="ChEBI" id="CHEBI:60240"/>
        <label>5</label>
        <note>in cluster A</note>
    </ligand>
</feature>
<feature type="binding site" evidence="2">
    <location>
        <position position="49"/>
    </location>
    <ligand>
        <name>a divalent metal cation</name>
        <dbReference type="ChEBI" id="CHEBI:60240"/>
        <label>7</label>
        <note>in cluster A</note>
    </ligand>
</feature>
<feature type="binding site" evidence="3">
    <location>
        <position position="54"/>
    </location>
    <ligand>
        <name>a divalent metal cation</name>
        <dbReference type="ChEBI" id="CHEBI:60240"/>
        <label>7</label>
        <note>in cluster A</note>
    </ligand>
</feature>
<feature type="binding site" evidence="2">
    <location>
        <position position="58"/>
    </location>
    <ligand>
        <name>a divalent metal cation</name>
        <dbReference type="ChEBI" id="CHEBI:60240"/>
        <label>7</label>
        <note>in cluster A</note>
    </ligand>
</feature>
<feature type="binding site" evidence="2">
    <location>
        <position position="59"/>
    </location>
    <ligand>
        <name>a divalent metal cation</name>
        <dbReference type="ChEBI" id="CHEBI:60240"/>
        <label>6</label>
        <note>in cluster A</note>
    </ligand>
</feature>
<feature type="binding site" evidence="2">
    <location>
        <position position="59"/>
    </location>
    <ligand>
        <name>a divalent metal cation</name>
        <dbReference type="ChEBI" id="CHEBI:60240"/>
        <label>7</label>
        <note>in cluster A</note>
    </ligand>
</feature>
<sequence>MDPCECSKSGTCNCGGSCTCTNCSCTSCKKSCCPCCPSGCTKCASGCVCKGKTCDTSCCQ</sequence>
<protein>
    <recommendedName>
        <fullName>Metallothionein B</fullName>
        <shortName>MT-B</shortName>
        <shortName>MT-II</shortName>
    </recommendedName>
</protein>
<name>MTB_TREBE</name>
<accession>P62678</accession>
<accession>Q92145</accession>
<dbReference type="EMBL" id="Z72485">
    <property type="protein sequence ID" value="CAA96566.1"/>
    <property type="molecule type" value="mRNA"/>
</dbReference>
<dbReference type="SMR" id="P62678"/>
<dbReference type="GO" id="GO:0046872">
    <property type="term" value="F:metal ion binding"/>
    <property type="evidence" value="ECO:0007669"/>
    <property type="project" value="UniProtKB-KW"/>
</dbReference>
<dbReference type="FunFam" id="4.10.10.10:FF:000001">
    <property type="entry name" value="Metallothionein"/>
    <property type="match status" value="1"/>
</dbReference>
<dbReference type="Gene3D" id="4.10.10.10">
    <property type="entry name" value="Metallothionein Isoform II"/>
    <property type="match status" value="1"/>
</dbReference>
<dbReference type="InterPro" id="IPR017854">
    <property type="entry name" value="Metalthion_dom_sf"/>
</dbReference>
<dbReference type="InterPro" id="IPR023587">
    <property type="entry name" value="Metalthion_dom_sf_vert"/>
</dbReference>
<dbReference type="InterPro" id="IPR000006">
    <property type="entry name" value="Metalthion_vert"/>
</dbReference>
<dbReference type="InterPro" id="IPR018064">
    <property type="entry name" value="Metalthion_vert_metal_BS"/>
</dbReference>
<dbReference type="PANTHER" id="PTHR23299">
    <property type="entry name" value="METALLOTHIONEIN"/>
    <property type="match status" value="1"/>
</dbReference>
<dbReference type="PANTHER" id="PTHR23299:SF24">
    <property type="entry name" value="METALLOTHIONEIN-1X"/>
    <property type="match status" value="1"/>
</dbReference>
<dbReference type="Pfam" id="PF00131">
    <property type="entry name" value="Metallothio"/>
    <property type="match status" value="1"/>
</dbReference>
<dbReference type="PRINTS" id="PR00860">
    <property type="entry name" value="MTVERTEBRATE"/>
</dbReference>
<dbReference type="SUPFAM" id="SSF57868">
    <property type="entry name" value="Metallothionein"/>
    <property type="match status" value="1"/>
</dbReference>
<dbReference type="PROSITE" id="PS00203">
    <property type="entry name" value="METALLOTHIONEIN_VRT"/>
    <property type="match status" value="1"/>
</dbReference>
<gene>
    <name type="primary">mtb</name>
</gene>